<gene>
    <name type="ordered locus">sce3898</name>
</gene>
<keyword id="KW-0004">4Fe-4S</keyword>
<keyword id="KW-0963">Cytoplasm</keyword>
<keyword id="KW-1015">Disulfide bond</keyword>
<keyword id="KW-0408">Iron</keyword>
<keyword id="KW-0411">Iron-sulfur</keyword>
<keyword id="KW-0479">Metal-binding</keyword>
<keyword id="KW-0489">Methyltransferase</keyword>
<keyword id="KW-1185">Reference proteome</keyword>
<keyword id="KW-0949">S-adenosyl-L-methionine</keyword>
<keyword id="KW-0808">Transferase</keyword>
<sequence>MLPEELAGACGIDLTDARRIVSLAHRLGELPARAPATVRRAALDAARSAGEIRTLALVERRASAEDPFVKYAFRLEDGATVESVRIPLERPGRYSACVSSQVGCALACAFCATGRMGLTRNLEAWEIVEQVRLIRRDLDATVGGGARVHGVLFQGMGEPLANADRVIQAIRVLSEPSAQAIDMRNITVCTAGLPSGIRRLAAEVPAVRLGLSLGSVRPGKRRLLMPIDGAHPLEEVLAAVGEHARASGHAPMWAYTLLADQNDTDEDAACLAALARGFAAQHGISPRLSLIPYNAIGAPGDPLPSPDGGDERGASADPFVRSARLDAFRAVLSAAGVGSIVRYSGGGDVGAACGQLARPSAEAQRPGGRRAPPRPGATAGAADVGPSAPPRPA</sequence>
<evidence type="ECO:0000250" key="1"/>
<evidence type="ECO:0000255" key="2"/>
<evidence type="ECO:0000255" key="3">
    <source>
        <dbReference type="PROSITE-ProRule" id="PRU01266"/>
    </source>
</evidence>
<evidence type="ECO:0000256" key="4">
    <source>
        <dbReference type="SAM" id="MobiDB-lite"/>
    </source>
</evidence>
<evidence type="ECO:0000305" key="5"/>
<dbReference type="EC" id="2.1.1.-"/>
<dbReference type="EMBL" id="AM746676">
    <property type="protein sequence ID" value="CAN94058.1"/>
    <property type="molecule type" value="Genomic_DNA"/>
</dbReference>
<dbReference type="SMR" id="A9EPV3"/>
<dbReference type="STRING" id="448385.sce3898"/>
<dbReference type="KEGG" id="scl:sce3898"/>
<dbReference type="eggNOG" id="COG0820">
    <property type="taxonomic scope" value="Bacteria"/>
</dbReference>
<dbReference type="HOGENOM" id="CLU_029101_2_0_7"/>
<dbReference type="OrthoDB" id="9793973at2"/>
<dbReference type="BioCyc" id="SCEL448385:SCE_RS19990-MONOMER"/>
<dbReference type="Proteomes" id="UP000002139">
    <property type="component" value="Chromosome"/>
</dbReference>
<dbReference type="GO" id="GO:0005737">
    <property type="term" value="C:cytoplasm"/>
    <property type="evidence" value="ECO:0007669"/>
    <property type="project" value="UniProtKB-SubCell"/>
</dbReference>
<dbReference type="GO" id="GO:0051539">
    <property type="term" value="F:4 iron, 4 sulfur cluster binding"/>
    <property type="evidence" value="ECO:0007669"/>
    <property type="project" value="UniProtKB-KW"/>
</dbReference>
<dbReference type="GO" id="GO:0046872">
    <property type="term" value="F:metal ion binding"/>
    <property type="evidence" value="ECO:0007669"/>
    <property type="project" value="UniProtKB-KW"/>
</dbReference>
<dbReference type="GO" id="GO:0008173">
    <property type="term" value="F:RNA methyltransferase activity"/>
    <property type="evidence" value="ECO:0007669"/>
    <property type="project" value="InterPro"/>
</dbReference>
<dbReference type="GO" id="GO:0070475">
    <property type="term" value="P:rRNA base methylation"/>
    <property type="evidence" value="ECO:0007669"/>
    <property type="project" value="TreeGrafter"/>
</dbReference>
<dbReference type="GO" id="GO:0030488">
    <property type="term" value="P:tRNA methylation"/>
    <property type="evidence" value="ECO:0007669"/>
    <property type="project" value="TreeGrafter"/>
</dbReference>
<dbReference type="Gene3D" id="3.20.20.70">
    <property type="entry name" value="Aldolase class I"/>
    <property type="match status" value="1"/>
</dbReference>
<dbReference type="InterPro" id="IPR013785">
    <property type="entry name" value="Aldolase_TIM"/>
</dbReference>
<dbReference type="InterPro" id="IPR040072">
    <property type="entry name" value="Methyltransferase_A"/>
</dbReference>
<dbReference type="InterPro" id="IPR004383">
    <property type="entry name" value="rRNA_lsu_MTrfase_RlmN/Cfr"/>
</dbReference>
<dbReference type="InterPro" id="IPR007197">
    <property type="entry name" value="rSAM"/>
</dbReference>
<dbReference type="PANTHER" id="PTHR30544">
    <property type="entry name" value="23S RRNA METHYLTRANSFERASE"/>
    <property type="match status" value="1"/>
</dbReference>
<dbReference type="PANTHER" id="PTHR30544:SF5">
    <property type="entry name" value="RADICAL SAM CORE DOMAIN-CONTAINING PROTEIN"/>
    <property type="match status" value="1"/>
</dbReference>
<dbReference type="Pfam" id="PF04055">
    <property type="entry name" value="Radical_SAM"/>
    <property type="match status" value="1"/>
</dbReference>
<dbReference type="PIRSF" id="PIRSF006004">
    <property type="entry name" value="CHP00048"/>
    <property type="match status" value="1"/>
</dbReference>
<dbReference type="SFLD" id="SFLDF00275">
    <property type="entry name" value="adenosine_C2_methyltransferase"/>
    <property type="match status" value="1"/>
</dbReference>
<dbReference type="SFLD" id="SFLDS00029">
    <property type="entry name" value="Radical_SAM"/>
    <property type="match status" value="1"/>
</dbReference>
<dbReference type="SUPFAM" id="SSF102114">
    <property type="entry name" value="Radical SAM enzymes"/>
    <property type="match status" value="1"/>
</dbReference>
<dbReference type="PROSITE" id="PS51918">
    <property type="entry name" value="RADICAL_SAM"/>
    <property type="match status" value="1"/>
</dbReference>
<organism>
    <name type="scientific">Sorangium cellulosum (strain So ce56)</name>
    <name type="common">Polyangium cellulosum (strain So ce56)</name>
    <dbReference type="NCBI Taxonomy" id="448385"/>
    <lineage>
        <taxon>Bacteria</taxon>
        <taxon>Pseudomonadati</taxon>
        <taxon>Myxococcota</taxon>
        <taxon>Polyangia</taxon>
        <taxon>Polyangiales</taxon>
        <taxon>Polyangiaceae</taxon>
        <taxon>Sorangium</taxon>
    </lineage>
</organism>
<name>Y3898_SORC5</name>
<proteinExistence type="inferred from homology"/>
<protein>
    <recommendedName>
        <fullName>Probable RNA methyltransferase sce3898</fullName>
        <ecNumber>2.1.1.-</ecNumber>
    </recommendedName>
</protein>
<feature type="chain" id="PRO_0000350421" description="Probable RNA methyltransferase sce3898">
    <location>
        <begin position="1"/>
        <end position="393"/>
    </location>
</feature>
<feature type="domain" description="Radical SAM core" evidence="3">
    <location>
        <begin position="90"/>
        <end position="329"/>
    </location>
</feature>
<feature type="region of interest" description="Disordered" evidence="4">
    <location>
        <begin position="357"/>
        <end position="393"/>
    </location>
</feature>
<feature type="compositionally biased region" description="Low complexity" evidence="4">
    <location>
        <begin position="373"/>
        <end position="382"/>
    </location>
</feature>
<feature type="active site" description="Proton acceptor" evidence="2">
    <location>
        <position position="82"/>
    </location>
</feature>
<feature type="active site" description="S-methylcysteine intermediate" evidence="1">
    <location>
        <position position="353"/>
    </location>
</feature>
<feature type="binding site" evidence="1">
    <location>
        <position position="104"/>
    </location>
    <ligand>
        <name>[4Fe-4S] cluster</name>
        <dbReference type="ChEBI" id="CHEBI:49883"/>
        <note>4Fe-4S-S-AdoMet</note>
    </ligand>
</feature>
<feature type="binding site" evidence="1">
    <location>
        <position position="108"/>
    </location>
    <ligand>
        <name>[4Fe-4S] cluster</name>
        <dbReference type="ChEBI" id="CHEBI:49883"/>
        <note>4Fe-4S-S-AdoMet</note>
    </ligand>
</feature>
<feature type="binding site" evidence="1">
    <location>
        <position position="111"/>
    </location>
    <ligand>
        <name>[4Fe-4S] cluster</name>
        <dbReference type="ChEBI" id="CHEBI:49883"/>
        <note>4Fe-4S-S-AdoMet</note>
    </ligand>
</feature>
<feature type="binding site" evidence="1">
    <location>
        <begin position="157"/>
        <end position="158"/>
    </location>
    <ligand>
        <name>S-adenosyl-L-methionine</name>
        <dbReference type="ChEBI" id="CHEBI:59789"/>
    </ligand>
</feature>
<feature type="binding site" evidence="1">
    <location>
        <begin position="212"/>
        <end position="214"/>
    </location>
    <ligand>
        <name>S-adenosyl-L-methionine</name>
        <dbReference type="ChEBI" id="CHEBI:59789"/>
    </ligand>
</feature>
<feature type="binding site" evidence="1">
    <location>
        <position position="294"/>
    </location>
    <ligand>
        <name>S-adenosyl-L-methionine</name>
        <dbReference type="ChEBI" id="CHEBI:59789"/>
    </ligand>
</feature>
<feature type="disulfide bond" description="(transient)" evidence="1">
    <location>
        <begin position="97"/>
        <end position="353"/>
    </location>
</feature>
<comment type="cofactor">
    <cofactor evidence="1">
        <name>[4Fe-4S] cluster</name>
        <dbReference type="ChEBI" id="CHEBI:49883"/>
    </cofactor>
    <text evidence="1">Binds 1 [4Fe-4S] cluster. The cluster is coordinated with 3 cysteines and an exchangeable S-adenosyl-L-methionine.</text>
</comment>
<comment type="subcellular location">
    <subcellularLocation>
        <location evidence="5">Cytoplasm</location>
    </subcellularLocation>
</comment>
<comment type="similarity">
    <text evidence="5">Belongs to the radical SAM superfamily. RlmN family.</text>
</comment>
<reference key="1">
    <citation type="journal article" date="2007" name="Nat. Biotechnol.">
        <title>Complete genome sequence of the myxobacterium Sorangium cellulosum.</title>
        <authorList>
            <person name="Schneiker S."/>
            <person name="Perlova O."/>
            <person name="Kaiser O."/>
            <person name="Gerth K."/>
            <person name="Alici A."/>
            <person name="Altmeyer M.O."/>
            <person name="Bartels D."/>
            <person name="Bekel T."/>
            <person name="Beyer S."/>
            <person name="Bode E."/>
            <person name="Bode H.B."/>
            <person name="Bolten C.J."/>
            <person name="Choudhuri J.V."/>
            <person name="Doss S."/>
            <person name="Elnakady Y.A."/>
            <person name="Frank B."/>
            <person name="Gaigalat L."/>
            <person name="Goesmann A."/>
            <person name="Groeger C."/>
            <person name="Gross F."/>
            <person name="Jelsbak L."/>
            <person name="Jelsbak L."/>
            <person name="Kalinowski J."/>
            <person name="Kegler C."/>
            <person name="Knauber T."/>
            <person name="Konietzny S."/>
            <person name="Kopp M."/>
            <person name="Krause L."/>
            <person name="Krug D."/>
            <person name="Linke B."/>
            <person name="Mahmud T."/>
            <person name="Martinez-Arias R."/>
            <person name="McHardy A.C."/>
            <person name="Merai M."/>
            <person name="Meyer F."/>
            <person name="Mormann S."/>
            <person name="Munoz-Dorado J."/>
            <person name="Perez J."/>
            <person name="Pradella S."/>
            <person name="Rachid S."/>
            <person name="Raddatz G."/>
            <person name="Rosenau F."/>
            <person name="Rueckert C."/>
            <person name="Sasse F."/>
            <person name="Scharfe M."/>
            <person name="Schuster S.C."/>
            <person name="Suen G."/>
            <person name="Treuner-Lange A."/>
            <person name="Velicer G.J."/>
            <person name="Vorholter F.-J."/>
            <person name="Weissman K.J."/>
            <person name="Welch R.D."/>
            <person name="Wenzel S.C."/>
            <person name="Whitworth D.E."/>
            <person name="Wilhelm S."/>
            <person name="Wittmann C."/>
            <person name="Bloecker H."/>
            <person name="Puehler A."/>
            <person name="Mueller R."/>
        </authorList>
    </citation>
    <scope>NUCLEOTIDE SEQUENCE [LARGE SCALE GENOMIC DNA]</scope>
    <source>
        <strain>So ce56</strain>
    </source>
</reference>
<accession>A9EPV3</accession>